<evidence type="ECO:0000255" key="1"/>
<evidence type="ECO:0000303" key="2">
    <source>
    </source>
</evidence>
<evidence type="ECO:0000305" key="3"/>
<gene>
    <name type="primary">SLC35F4</name>
    <name type="synonym">C14orf36</name>
</gene>
<protein>
    <recommendedName>
        <fullName>Solute carrier family 35 member F4</fullName>
    </recommendedName>
</protein>
<proteinExistence type="evidence at transcript level"/>
<feature type="chain" id="PRO_0000311965" description="Solute carrier family 35 member F4">
    <location>
        <begin position="1"/>
        <end position="521"/>
    </location>
</feature>
<feature type="transmembrane region" description="Helical" evidence="1">
    <location>
        <begin position="160"/>
        <end position="180"/>
    </location>
</feature>
<feature type="transmembrane region" description="Helical" evidence="1">
    <location>
        <begin position="192"/>
        <end position="212"/>
    </location>
</feature>
<feature type="transmembrane region" description="Helical" evidence="1">
    <location>
        <begin position="248"/>
        <end position="266"/>
    </location>
</feature>
<feature type="transmembrane region" description="Helical" evidence="1">
    <location>
        <begin position="277"/>
        <end position="297"/>
    </location>
</feature>
<feature type="transmembrane region" description="Helical" evidence="1">
    <location>
        <begin position="301"/>
        <end position="321"/>
    </location>
</feature>
<feature type="transmembrane region" description="Helical" evidence="1">
    <location>
        <begin position="330"/>
        <end position="350"/>
    </location>
</feature>
<feature type="transmembrane region" description="Helical" evidence="1">
    <location>
        <begin position="365"/>
        <end position="385"/>
    </location>
</feature>
<feature type="transmembrane region" description="Helical" evidence="1">
    <location>
        <begin position="395"/>
        <end position="417"/>
    </location>
</feature>
<feature type="transmembrane region" description="Helical" evidence="1">
    <location>
        <begin position="419"/>
        <end position="441"/>
    </location>
</feature>
<feature type="transmembrane region" description="Helical" evidence="1">
    <location>
        <begin position="450"/>
        <end position="470"/>
    </location>
</feature>
<feature type="domain" description="EamA">
    <location>
        <begin position="261"/>
        <end position="321"/>
    </location>
</feature>
<feature type="splice variant" id="VSP_029669" description="In isoform 2." evidence="2">
    <location>
        <begin position="1"/>
        <end position="159"/>
    </location>
</feature>
<comment type="function">
    <text evidence="3">Putative solute transporter.</text>
</comment>
<comment type="subcellular location">
    <subcellularLocation>
        <location evidence="3">Membrane</location>
        <topology evidence="3">Multi-pass membrane protein</topology>
    </subcellularLocation>
</comment>
<comment type="alternative products">
    <event type="alternative splicing"/>
    <isoform>
        <id>A4IF30-1</id>
        <name>1</name>
        <sequence type="displayed"/>
    </isoform>
    <isoform>
        <id>A4IF30-2</id>
        <name>2</name>
        <sequence type="described" ref="VSP_029669"/>
    </isoform>
</comment>
<comment type="similarity">
    <text evidence="3">Belongs to the SLC35F solute transporter family.</text>
</comment>
<organism>
    <name type="scientific">Homo sapiens</name>
    <name type="common">Human</name>
    <dbReference type="NCBI Taxonomy" id="9606"/>
    <lineage>
        <taxon>Eukaryota</taxon>
        <taxon>Metazoa</taxon>
        <taxon>Chordata</taxon>
        <taxon>Craniata</taxon>
        <taxon>Vertebrata</taxon>
        <taxon>Euteleostomi</taxon>
        <taxon>Mammalia</taxon>
        <taxon>Eutheria</taxon>
        <taxon>Euarchontoglires</taxon>
        <taxon>Primates</taxon>
        <taxon>Haplorrhini</taxon>
        <taxon>Catarrhini</taxon>
        <taxon>Hominidae</taxon>
        <taxon>Homo</taxon>
    </lineage>
</organism>
<keyword id="KW-0025">Alternative splicing</keyword>
<keyword id="KW-0472">Membrane</keyword>
<keyword id="KW-1185">Reference proteome</keyword>
<keyword id="KW-0812">Transmembrane</keyword>
<keyword id="KW-1133">Transmembrane helix</keyword>
<keyword id="KW-0813">Transport</keyword>
<name>S35F4_HUMAN</name>
<dbReference type="EMBL" id="AL136520">
    <property type="status" value="NOT_ANNOTATED_CDS"/>
    <property type="molecule type" value="Genomic_DNA"/>
</dbReference>
<dbReference type="EMBL" id="AL161804">
    <property type="status" value="NOT_ANNOTATED_CDS"/>
    <property type="molecule type" value="Genomic_DNA"/>
</dbReference>
<dbReference type="EMBL" id="BC101318">
    <property type="protein sequence ID" value="AAI01319.1"/>
    <property type="molecule type" value="mRNA"/>
</dbReference>
<dbReference type="EMBL" id="BC101320">
    <property type="protein sequence ID" value="AAI01321.1"/>
    <property type="molecule type" value="mRNA"/>
</dbReference>
<dbReference type="EMBL" id="BC101321">
    <property type="protein sequence ID" value="AAI01322.1"/>
    <property type="molecule type" value="mRNA"/>
</dbReference>
<dbReference type="CCDS" id="CCDS86392.1">
    <molecule id="A4IF30-2"/>
</dbReference>
<dbReference type="RefSeq" id="NP_001193849.1">
    <property type="nucleotide sequence ID" value="NM_001206920.1"/>
</dbReference>
<dbReference type="RefSeq" id="NP_001293016.1">
    <property type="nucleotide sequence ID" value="NM_001306087.1"/>
</dbReference>
<dbReference type="RefSeq" id="NP_001338943.1">
    <molecule id="A4IF30-2"/>
    <property type="nucleotide sequence ID" value="NM_001352014.2"/>
</dbReference>
<dbReference type="RefSeq" id="XP_011535027.1">
    <property type="nucleotide sequence ID" value="XM_011536725.1"/>
</dbReference>
<dbReference type="RefSeq" id="XP_016876749.1">
    <property type="nucleotide sequence ID" value="XM_017021260.1"/>
</dbReference>
<dbReference type="FunCoup" id="A4IF30">
    <property type="interactions" value="181"/>
</dbReference>
<dbReference type="STRING" id="9606.ENSP00000452086"/>
<dbReference type="TCDB" id="2.A.7.24.14">
    <property type="family name" value="the drug/metabolite transporter (dmt) superfamily"/>
</dbReference>
<dbReference type="iPTMnet" id="A4IF30"/>
<dbReference type="PhosphoSitePlus" id="A4IF30"/>
<dbReference type="BioMuta" id="SLC35F4"/>
<dbReference type="jPOST" id="A4IF30"/>
<dbReference type="PaxDb" id="9606-ENSP00000342518"/>
<dbReference type="Antibodypedia" id="50928">
    <property type="antibodies" value="24 antibodies from 9 providers"/>
</dbReference>
<dbReference type="DNASU" id="341880"/>
<dbReference type="Ensembl" id="ENST00000339762.10">
    <molecule id="A4IF30-1"/>
    <property type="protein sequence ID" value="ENSP00000342518.6"/>
    <property type="gene ID" value="ENSG00000151812.15"/>
</dbReference>
<dbReference type="Ensembl" id="ENST00000554729.5">
    <molecule id="A4IF30-2"/>
    <property type="protein sequence ID" value="ENSP00000451990.1"/>
    <property type="gene ID" value="ENSG00000151812.15"/>
</dbReference>
<dbReference type="GeneID" id="341880"/>
<dbReference type="KEGG" id="hsa:341880"/>
<dbReference type="UCSC" id="uc010apa.2">
    <molecule id="A4IF30-1"/>
    <property type="organism name" value="human"/>
</dbReference>
<dbReference type="AGR" id="HGNC:19845"/>
<dbReference type="CTD" id="341880"/>
<dbReference type="DisGeNET" id="341880"/>
<dbReference type="GeneCards" id="SLC35F4"/>
<dbReference type="HGNC" id="HGNC:19845">
    <property type="gene designation" value="SLC35F4"/>
</dbReference>
<dbReference type="HPA" id="ENSG00000151812">
    <property type="expression patterns" value="Group enriched (brain, retina, seminal vesicle)"/>
</dbReference>
<dbReference type="neXtProt" id="NX_A4IF30"/>
<dbReference type="OpenTargets" id="ENSG00000151812"/>
<dbReference type="PharmGKB" id="PA134959551"/>
<dbReference type="VEuPathDB" id="HostDB:ENSG00000151812"/>
<dbReference type="eggNOG" id="KOG4314">
    <property type="taxonomic scope" value="Eukaryota"/>
</dbReference>
<dbReference type="GeneTree" id="ENSGT00390000008727"/>
<dbReference type="HOGENOM" id="CLU_022280_0_1_1"/>
<dbReference type="InParanoid" id="A4IF30"/>
<dbReference type="OrthoDB" id="10062838at2759"/>
<dbReference type="PAN-GO" id="A4IF30">
    <property type="GO annotations" value="0 GO annotations based on evolutionary models"/>
</dbReference>
<dbReference type="PhylomeDB" id="A4IF30"/>
<dbReference type="TreeFam" id="TF313798"/>
<dbReference type="PathwayCommons" id="A4IF30"/>
<dbReference type="BioGRID-ORCS" id="341880">
    <property type="hits" value="3 hits in 308 CRISPR screens"/>
</dbReference>
<dbReference type="ChiTaRS" id="SLC35F4">
    <property type="organism name" value="human"/>
</dbReference>
<dbReference type="GenomeRNAi" id="341880"/>
<dbReference type="Pharos" id="A4IF30">
    <property type="development level" value="Tdark"/>
</dbReference>
<dbReference type="PRO" id="PR:A4IF30"/>
<dbReference type="Proteomes" id="UP000005640">
    <property type="component" value="Chromosome 14"/>
</dbReference>
<dbReference type="RNAct" id="A4IF30">
    <property type="molecule type" value="protein"/>
</dbReference>
<dbReference type="Bgee" id="ENSG00000151812">
    <property type="expression patterns" value="Expressed in cerebellar hemisphere and 101 other cell types or tissues"/>
</dbReference>
<dbReference type="ExpressionAtlas" id="A4IF30">
    <property type="expression patterns" value="baseline and differential"/>
</dbReference>
<dbReference type="GO" id="GO:0016020">
    <property type="term" value="C:membrane"/>
    <property type="evidence" value="ECO:0007669"/>
    <property type="project" value="UniProtKB-SubCell"/>
</dbReference>
<dbReference type="InterPro" id="IPR000620">
    <property type="entry name" value="EamA_dom"/>
</dbReference>
<dbReference type="InterPro" id="IPR026505">
    <property type="entry name" value="Solute_c_fam_35_mem_F3/F4"/>
</dbReference>
<dbReference type="PANTHER" id="PTHR19346:SF2">
    <property type="entry name" value="SOLUTE CARRIER FAMILY 35 MEMBER F4"/>
    <property type="match status" value="1"/>
</dbReference>
<dbReference type="PANTHER" id="PTHR19346">
    <property type="entry name" value="SUGAR PHOSPHATE TRANSPORTER DOMAIN-CONTAINING PROTEIN"/>
    <property type="match status" value="1"/>
</dbReference>
<dbReference type="Pfam" id="PF00892">
    <property type="entry name" value="EamA"/>
    <property type="match status" value="1"/>
</dbReference>
<dbReference type="SUPFAM" id="SSF103481">
    <property type="entry name" value="Multidrug resistance efflux transporter EmrE"/>
    <property type="match status" value="1"/>
</dbReference>
<sequence>MDELLLDLFHKLTSGRQLAAGNGLCGISHKEQEVWKPGHNILVKMRKEDKSLVWLIHSTLARYTQVTNFLGTSRSSVTRCKPGANCPSSHSGISRQLSPLSVTEDSSAPILELQNQGSSGVCGHRVERQNRSADDGTQTHSENSSQENRIKARCLSCTSMVLKGIWGLLIILSVSSSWVGTTQIVKITYKNFYCPFFMTWFSTNWNIMFFPVYYSGHLATAQEKQSPMKKFRECSRIFGEDGLTLKLFLKRTAPFSILWTLTNYLYLLALKKLTATDVSALFCCNKAFVFLLSWIVLKDRFMGVRIVAAIMAITGIVMMAYADNFHADSIIGVAFAVGSASTSALYKVLFKMFLGSANFGEAAHFVSTLGFFNLIFISFTPVILYFTKVEHWSSFAALPWGCLCGMAGLWLAFNILVNVGVVLTYPILISIGTVLSVPGNAAVDLLKQEVIFNVVRLAATIIICIGFLLMLLPEEWDEITLRFINSLKEKKSEEHVDDVTDPSIHLRGRGRANGTVSIPLA</sequence>
<reference key="1">
    <citation type="journal article" date="2003" name="Nature">
        <title>The DNA sequence and analysis of human chromosome 14.</title>
        <authorList>
            <person name="Heilig R."/>
            <person name="Eckenberg R."/>
            <person name="Petit J.-L."/>
            <person name="Fonknechten N."/>
            <person name="Da Silva C."/>
            <person name="Cattolico L."/>
            <person name="Levy M."/>
            <person name="Barbe V."/>
            <person name="De Berardinis V."/>
            <person name="Ureta-Vidal A."/>
            <person name="Pelletier E."/>
            <person name="Vico V."/>
            <person name="Anthouard V."/>
            <person name="Rowen L."/>
            <person name="Madan A."/>
            <person name="Qin S."/>
            <person name="Sun H."/>
            <person name="Du H."/>
            <person name="Pepin K."/>
            <person name="Artiguenave F."/>
            <person name="Robert C."/>
            <person name="Cruaud C."/>
            <person name="Bruels T."/>
            <person name="Jaillon O."/>
            <person name="Friedlander L."/>
            <person name="Samson G."/>
            <person name="Brottier P."/>
            <person name="Cure S."/>
            <person name="Segurens B."/>
            <person name="Aniere F."/>
            <person name="Samain S."/>
            <person name="Crespeau H."/>
            <person name="Abbasi N."/>
            <person name="Aiach N."/>
            <person name="Boscus D."/>
            <person name="Dickhoff R."/>
            <person name="Dors M."/>
            <person name="Dubois I."/>
            <person name="Friedman C."/>
            <person name="Gouyvenoux M."/>
            <person name="James R."/>
            <person name="Madan A."/>
            <person name="Mairey-Estrada B."/>
            <person name="Mangenot S."/>
            <person name="Martins N."/>
            <person name="Menard M."/>
            <person name="Oztas S."/>
            <person name="Ratcliffe A."/>
            <person name="Shaffer T."/>
            <person name="Trask B."/>
            <person name="Vacherie B."/>
            <person name="Bellemere C."/>
            <person name="Belser C."/>
            <person name="Besnard-Gonnet M."/>
            <person name="Bartol-Mavel D."/>
            <person name="Boutard M."/>
            <person name="Briez-Silla S."/>
            <person name="Combette S."/>
            <person name="Dufosse-Laurent V."/>
            <person name="Ferron C."/>
            <person name="Lechaplais C."/>
            <person name="Louesse C."/>
            <person name="Muselet D."/>
            <person name="Magdelenat G."/>
            <person name="Pateau E."/>
            <person name="Petit E."/>
            <person name="Sirvain-Trukniewicz P."/>
            <person name="Trybou A."/>
            <person name="Vega-Czarny N."/>
            <person name="Bataille E."/>
            <person name="Bluet E."/>
            <person name="Bordelais I."/>
            <person name="Dubois M."/>
            <person name="Dumont C."/>
            <person name="Guerin T."/>
            <person name="Haffray S."/>
            <person name="Hammadi R."/>
            <person name="Muanga J."/>
            <person name="Pellouin V."/>
            <person name="Robert D."/>
            <person name="Wunderle E."/>
            <person name="Gauguet G."/>
            <person name="Roy A."/>
            <person name="Sainte-Marthe L."/>
            <person name="Verdier J."/>
            <person name="Verdier-Discala C."/>
            <person name="Hillier L.W."/>
            <person name="Fulton L."/>
            <person name="McPherson J."/>
            <person name="Matsuda F."/>
            <person name="Wilson R."/>
            <person name="Scarpelli C."/>
            <person name="Gyapay G."/>
            <person name="Wincker P."/>
            <person name="Saurin W."/>
            <person name="Quetier F."/>
            <person name="Waterston R."/>
            <person name="Hood L."/>
            <person name="Weissenbach J."/>
        </authorList>
    </citation>
    <scope>NUCLEOTIDE SEQUENCE [LARGE SCALE GENOMIC DNA]</scope>
</reference>
<reference key="2">
    <citation type="journal article" date="2004" name="Genome Res.">
        <title>The status, quality, and expansion of the NIH full-length cDNA project: the Mammalian Gene Collection (MGC).</title>
        <authorList>
            <consortium name="The MGC Project Team"/>
        </authorList>
    </citation>
    <scope>NUCLEOTIDE SEQUENCE [LARGE SCALE MRNA] (ISOFORM 2)</scope>
</reference>
<accession>A4IF30</accession>
<accession>A6NDQ3</accession>